<protein>
    <recommendedName>
        <fullName evidence="1">Large ribosomal subunit protein uL16</fullName>
    </recommendedName>
    <alternativeName>
        <fullName evidence="2">50S ribosomal protein L16</fullName>
    </alternativeName>
</protein>
<comment type="function">
    <text evidence="1">Binds 23S rRNA and is also seen to make contacts with the A and possibly P site tRNAs.</text>
</comment>
<comment type="subunit">
    <text evidence="1">Part of the 50S ribosomal subunit.</text>
</comment>
<comment type="similarity">
    <text evidence="1">Belongs to the universal ribosomal protein uL16 family.</text>
</comment>
<keyword id="KW-1185">Reference proteome</keyword>
<keyword id="KW-0687">Ribonucleoprotein</keyword>
<keyword id="KW-0689">Ribosomal protein</keyword>
<keyword id="KW-0694">RNA-binding</keyword>
<keyword id="KW-0699">rRNA-binding</keyword>
<keyword id="KW-0820">tRNA-binding</keyword>
<feature type="chain" id="PRO_1000086746" description="Large ribosomal subunit protein uL16">
    <location>
        <begin position="1"/>
        <end position="151"/>
    </location>
</feature>
<dbReference type="EMBL" id="CP000909">
    <property type="protein sequence ID" value="ABY35585.1"/>
    <property type="molecule type" value="Genomic_DNA"/>
</dbReference>
<dbReference type="RefSeq" id="WP_012258238.1">
    <property type="nucleotide sequence ID" value="NC_010175.1"/>
</dbReference>
<dbReference type="RefSeq" id="YP_001635974.1">
    <property type="nucleotide sequence ID" value="NC_010175.1"/>
</dbReference>
<dbReference type="SMR" id="A9WH73"/>
<dbReference type="FunCoup" id="A9WH73">
    <property type="interactions" value="438"/>
</dbReference>
<dbReference type="STRING" id="324602.Caur_2376"/>
<dbReference type="EnsemblBacteria" id="ABY35585">
    <property type="protein sequence ID" value="ABY35585"/>
    <property type="gene ID" value="Caur_2376"/>
</dbReference>
<dbReference type="KEGG" id="cau:Caur_2376"/>
<dbReference type="PATRIC" id="fig|324602.8.peg.2690"/>
<dbReference type="eggNOG" id="COG0197">
    <property type="taxonomic scope" value="Bacteria"/>
</dbReference>
<dbReference type="HOGENOM" id="CLU_078858_2_1_0"/>
<dbReference type="InParanoid" id="A9WH73"/>
<dbReference type="Proteomes" id="UP000002008">
    <property type="component" value="Chromosome"/>
</dbReference>
<dbReference type="GO" id="GO:0022625">
    <property type="term" value="C:cytosolic large ribosomal subunit"/>
    <property type="evidence" value="ECO:0000318"/>
    <property type="project" value="GO_Central"/>
</dbReference>
<dbReference type="GO" id="GO:0019843">
    <property type="term" value="F:rRNA binding"/>
    <property type="evidence" value="ECO:0000318"/>
    <property type="project" value="GO_Central"/>
</dbReference>
<dbReference type="GO" id="GO:0003735">
    <property type="term" value="F:structural constituent of ribosome"/>
    <property type="evidence" value="ECO:0000318"/>
    <property type="project" value="GO_Central"/>
</dbReference>
<dbReference type="GO" id="GO:0000049">
    <property type="term" value="F:tRNA binding"/>
    <property type="evidence" value="ECO:0007669"/>
    <property type="project" value="UniProtKB-KW"/>
</dbReference>
<dbReference type="GO" id="GO:0006412">
    <property type="term" value="P:translation"/>
    <property type="evidence" value="ECO:0007669"/>
    <property type="project" value="UniProtKB-UniRule"/>
</dbReference>
<dbReference type="CDD" id="cd01433">
    <property type="entry name" value="Ribosomal_L16_L10e"/>
    <property type="match status" value="1"/>
</dbReference>
<dbReference type="FunFam" id="3.90.1170.10:FF:000001">
    <property type="entry name" value="50S ribosomal protein L16"/>
    <property type="match status" value="1"/>
</dbReference>
<dbReference type="Gene3D" id="3.90.1170.10">
    <property type="entry name" value="Ribosomal protein L10e/L16"/>
    <property type="match status" value="1"/>
</dbReference>
<dbReference type="HAMAP" id="MF_01342">
    <property type="entry name" value="Ribosomal_uL16"/>
    <property type="match status" value="1"/>
</dbReference>
<dbReference type="InterPro" id="IPR047873">
    <property type="entry name" value="Ribosomal_uL16"/>
</dbReference>
<dbReference type="InterPro" id="IPR000114">
    <property type="entry name" value="Ribosomal_uL16_bact-type"/>
</dbReference>
<dbReference type="InterPro" id="IPR020798">
    <property type="entry name" value="Ribosomal_uL16_CS"/>
</dbReference>
<dbReference type="InterPro" id="IPR016180">
    <property type="entry name" value="Ribosomal_uL16_dom"/>
</dbReference>
<dbReference type="InterPro" id="IPR036920">
    <property type="entry name" value="Ribosomal_uL16_sf"/>
</dbReference>
<dbReference type="NCBIfam" id="TIGR01164">
    <property type="entry name" value="rplP_bact"/>
    <property type="match status" value="1"/>
</dbReference>
<dbReference type="PANTHER" id="PTHR12220">
    <property type="entry name" value="50S/60S RIBOSOMAL PROTEIN L16"/>
    <property type="match status" value="1"/>
</dbReference>
<dbReference type="PANTHER" id="PTHR12220:SF13">
    <property type="entry name" value="LARGE RIBOSOMAL SUBUNIT PROTEIN UL16M"/>
    <property type="match status" value="1"/>
</dbReference>
<dbReference type="Pfam" id="PF00252">
    <property type="entry name" value="Ribosomal_L16"/>
    <property type="match status" value="1"/>
</dbReference>
<dbReference type="PRINTS" id="PR00060">
    <property type="entry name" value="RIBOSOMALL16"/>
</dbReference>
<dbReference type="SUPFAM" id="SSF54686">
    <property type="entry name" value="Ribosomal protein L16p/L10e"/>
    <property type="match status" value="1"/>
</dbReference>
<dbReference type="PROSITE" id="PS00586">
    <property type="entry name" value="RIBOSOMAL_L16_1"/>
    <property type="match status" value="1"/>
</dbReference>
<dbReference type="PROSITE" id="PS00701">
    <property type="entry name" value="RIBOSOMAL_L16_2"/>
    <property type="match status" value="1"/>
</dbReference>
<reference key="1">
    <citation type="journal article" date="2011" name="BMC Genomics">
        <title>Complete genome sequence of the filamentous anoxygenic phototrophic bacterium Chloroflexus aurantiacus.</title>
        <authorList>
            <person name="Tang K.H."/>
            <person name="Barry K."/>
            <person name="Chertkov O."/>
            <person name="Dalin E."/>
            <person name="Han C.S."/>
            <person name="Hauser L.J."/>
            <person name="Honchak B.M."/>
            <person name="Karbach L.E."/>
            <person name="Land M.L."/>
            <person name="Lapidus A."/>
            <person name="Larimer F.W."/>
            <person name="Mikhailova N."/>
            <person name="Pitluck S."/>
            <person name="Pierson B.K."/>
            <person name="Blankenship R.E."/>
        </authorList>
    </citation>
    <scope>NUCLEOTIDE SEQUENCE [LARGE SCALE GENOMIC DNA]</scope>
    <source>
        <strain>ATCC 29366 / DSM 635 / J-10-fl</strain>
    </source>
</reference>
<accession>A9WH73</accession>
<evidence type="ECO:0000255" key="1">
    <source>
        <dbReference type="HAMAP-Rule" id="MF_01342"/>
    </source>
</evidence>
<evidence type="ECO:0000305" key="2"/>
<name>RL16_CHLAA</name>
<organism>
    <name type="scientific">Chloroflexus aurantiacus (strain ATCC 29366 / DSM 635 / J-10-fl)</name>
    <dbReference type="NCBI Taxonomy" id="324602"/>
    <lineage>
        <taxon>Bacteria</taxon>
        <taxon>Bacillati</taxon>
        <taxon>Chloroflexota</taxon>
        <taxon>Chloroflexia</taxon>
        <taxon>Chloroflexales</taxon>
        <taxon>Chloroflexineae</taxon>
        <taxon>Chloroflexaceae</taxon>
        <taxon>Chloroflexus</taxon>
    </lineage>
</organism>
<gene>
    <name evidence="1" type="primary">rplP</name>
    <name type="ordered locus">Caur_2376</name>
</gene>
<proteinExistence type="inferred from homology"/>
<sequence>MLLPKRTKYRKMQKGRSPGLSYRGNNVVFGEYGLMALEPSWISSRQIEAARRAITNYVKRGGKVWIRIFPDKPVTRKPAETRMGGGKGSVDHWVAVVKPGRIMFELAGVREDVAHEALRRAAQKLPIKCKVIDREEQGTMAKPEEVSSESE</sequence>